<keyword id="KW-1015">Disulfide bond</keyword>
<keyword id="KW-0528">Neurotoxin</keyword>
<keyword id="KW-0964">Secreted</keyword>
<keyword id="KW-0800">Toxin</keyword>
<dbReference type="EMBL" id="JF724079">
    <property type="protein sequence ID" value="AEK21699.1"/>
    <property type="molecule type" value="mRNA"/>
</dbReference>
<dbReference type="GO" id="GO:0005576">
    <property type="term" value="C:extracellular region"/>
    <property type="evidence" value="ECO:0007669"/>
    <property type="project" value="UniProtKB-SubCell"/>
</dbReference>
<dbReference type="GO" id="GO:0090729">
    <property type="term" value="F:toxin activity"/>
    <property type="evidence" value="ECO:0007669"/>
    <property type="project" value="UniProtKB-KW"/>
</dbReference>
<name>CUC13_CONCL</name>
<reference key="1">
    <citation type="submission" date="2011-03" db="EMBL/GenBank/DDBJ databases">
        <title>Conotoxins of Conus californicus.</title>
        <authorList>
            <person name="Elliger C.A."/>
            <person name="Lebaric Z.N."/>
            <person name="Gilly W.F."/>
        </authorList>
    </citation>
    <scope>NUCLEOTIDE SEQUENCE [MRNA]</scope>
    <source>
        <tissue>Venom duct</tissue>
    </source>
</reference>
<accession>G1C1T1</accession>
<protein>
    <recommendedName>
        <fullName>Conotoxin Cal12.1p3</fullName>
    </recommendedName>
</protein>
<comment type="subcellular location">
    <subcellularLocation>
        <location evidence="1">Secreted</location>
    </subcellularLocation>
</comment>
<comment type="tissue specificity">
    <text>Expressed by the venom duct.</text>
</comment>
<comment type="domain">
    <text>The cysteine framework is XII (C-C-C-C-CC-C-C).</text>
</comment>
<comment type="PTM">
    <text>Contains 4 disulfide bonds.</text>
</comment>
<feature type="propeptide" id="PRO_0000414954" evidence="1">
    <location>
        <begin position="1" status="less than"/>
        <end position="21"/>
    </location>
</feature>
<feature type="peptide" id="PRO_5000785210" description="Conotoxin Cal12.1p3">
    <location>
        <begin position="23"/>
        <end position="68"/>
    </location>
</feature>
<feature type="non-terminal residue">
    <location>
        <position position="1"/>
    </location>
</feature>
<organism>
    <name type="scientific">Californiconus californicus</name>
    <name type="common">California cone</name>
    <name type="synonym">Conus californicus</name>
    <dbReference type="NCBI Taxonomy" id="1736779"/>
    <lineage>
        <taxon>Eukaryota</taxon>
        <taxon>Metazoa</taxon>
        <taxon>Spiralia</taxon>
        <taxon>Lophotrochozoa</taxon>
        <taxon>Mollusca</taxon>
        <taxon>Gastropoda</taxon>
        <taxon>Caenogastropoda</taxon>
        <taxon>Neogastropoda</taxon>
        <taxon>Conoidea</taxon>
        <taxon>Conidae</taxon>
        <taxon>Californiconus</taxon>
    </lineage>
</organism>
<evidence type="ECO:0000250" key="1"/>
<sequence>DLITNSYTRGKPRHVTSWPKLRALGNCVPVPGQCIGNGCFCDREAPHGNCCDTDGCTSLFWCPGSKAG</sequence>
<proteinExistence type="evidence at transcript level"/>